<reference key="1">
    <citation type="journal article" date="1997" name="Biochem. Biophys. Res. Commun.">
        <title>The gnd gene encoding a novel 6-phosphogluconate dehydrogenase and its adjacent region of Actinobacillus actinomycetemcomitans chromosomal DNA.</title>
        <authorList>
            <person name="Yoshida Y."/>
            <person name="Nakano Y."/>
            <person name="Yamashita Y."/>
            <person name="Koga T."/>
        </authorList>
    </citation>
    <scope>NUCLEOTIDE SEQUENCE [GENOMIC DNA]</scope>
    <source>
        <strain>ATCC 43718 / FDC Y4 / Serotype b</strain>
    </source>
</reference>
<dbReference type="EC" id="1.1.1.100"/>
<dbReference type="EMBL" id="D88189">
    <property type="protein sequence ID" value="BAA13560.1"/>
    <property type="molecule type" value="Genomic_DNA"/>
</dbReference>
<dbReference type="RefSeq" id="WP_005545124.1">
    <property type="nucleotide sequence ID" value="NZ_VSEW01000004.1"/>
</dbReference>
<dbReference type="SMR" id="P70720"/>
<dbReference type="STRING" id="714.ACT75_06515"/>
<dbReference type="GeneID" id="77211127"/>
<dbReference type="eggNOG" id="COG1028">
    <property type="taxonomic scope" value="Bacteria"/>
</dbReference>
<dbReference type="OMA" id="EFHSCDV"/>
<dbReference type="UniPathway" id="UPA00094"/>
<dbReference type="GO" id="GO:0004316">
    <property type="term" value="F:3-oxoacyl-[acyl-carrier-protein] reductase (NADPH) activity"/>
    <property type="evidence" value="ECO:0007669"/>
    <property type="project" value="UniProtKB-EC"/>
</dbReference>
<dbReference type="GO" id="GO:0006633">
    <property type="term" value="P:fatty acid biosynthetic process"/>
    <property type="evidence" value="ECO:0007669"/>
    <property type="project" value="UniProtKB-UniPathway"/>
</dbReference>
<dbReference type="CDD" id="cd05333">
    <property type="entry name" value="BKR_SDR_c"/>
    <property type="match status" value="1"/>
</dbReference>
<dbReference type="FunFam" id="3.40.50.720:FF:000173">
    <property type="entry name" value="3-oxoacyl-[acyl-carrier protein] reductase"/>
    <property type="match status" value="1"/>
</dbReference>
<dbReference type="Gene3D" id="3.40.50.720">
    <property type="entry name" value="NAD(P)-binding Rossmann-like Domain"/>
    <property type="match status" value="1"/>
</dbReference>
<dbReference type="InterPro" id="IPR011285">
    <property type="entry name" value="FabG-rel"/>
</dbReference>
<dbReference type="InterPro" id="IPR036291">
    <property type="entry name" value="NAD(P)-bd_dom_sf"/>
</dbReference>
<dbReference type="InterPro" id="IPR050259">
    <property type="entry name" value="SDR"/>
</dbReference>
<dbReference type="InterPro" id="IPR002347">
    <property type="entry name" value="SDR_fam"/>
</dbReference>
<dbReference type="NCBIfam" id="TIGR01831">
    <property type="entry name" value="fabG_rel"/>
    <property type="match status" value="1"/>
</dbReference>
<dbReference type="NCBIfam" id="NF004200">
    <property type="entry name" value="PRK05653.1-5"/>
    <property type="match status" value="1"/>
</dbReference>
<dbReference type="NCBIfam" id="NF009466">
    <property type="entry name" value="PRK12826.1-2"/>
    <property type="match status" value="1"/>
</dbReference>
<dbReference type="PANTHER" id="PTHR42879">
    <property type="entry name" value="3-OXOACYL-(ACYL-CARRIER-PROTEIN) REDUCTASE"/>
    <property type="match status" value="1"/>
</dbReference>
<dbReference type="PANTHER" id="PTHR42879:SF2">
    <property type="entry name" value="3-OXOACYL-[ACYL-CARRIER-PROTEIN] REDUCTASE FABG"/>
    <property type="match status" value="1"/>
</dbReference>
<dbReference type="Pfam" id="PF00106">
    <property type="entry name" value="adh_short"/>
    <property type="match status" value="1"/>
</dbReference>
<dbReference type="PRINTS" id="PR00081">
    <property type="entry name" value="GDHRDH"/>
</dbReference>
<dbReference type="PRINTS" id="PR00080">
    <property type="entry name" value="SDRFAMILY"/>
</dbReference>
<dbReference type="SMART" id="SM00822">
    <property type="entry name" value="PKS_KR"/>
    <property type="match status" value="1"/>
</dbReference>
<dbReference type="SUPFAM" id="SSF51735">
    <property type="entry name" value="NAD(P)-binding Rossmann-fold domains"/>
    <property type="match status" value="1"/>
</dbReference>
<name>FABG_AGGAC</name>
<protein>
    <recommendedName>
        <fullName>3-oxoacyl-[acyl-carrier-protein] reductase FabG</fullName>
        <ecNumber>1.1.1.100</ecNumber>
    </recommendedName>
    <alternativeName>
        <fullName>3-ketoacyl-acyl carrier protein reductase</fullName>
    </alternativeName>
    <alternativeName>
        <fullName>Beta-Ketoacyl-acyl carrier protein reductase</fullName>
    </alternativeName>
    <alternativeName>
        <fullName>Beta-ketoacyl-ACP reductase</fullName>
    </alternativeName>
</protein>
<organism>
    <name type="scientific">Aggregatibacter actinomycetemcomitans</name>
    <name type="common">Actinobacillus actinomycetemcomitans</name>
    <name type="synonym">Haemophilus actinomycetemcomitans</name>
    <dbReference type="NCBI Taxonomy" id="714"/>
    <lineage>
        <taxon>Bacteria</taxon>
        <taxon>Pseudomonadati</taxon>
        <taxon>Pseudomonadota</taxon>
        <taxon>Gammaproteobacteria</taxon>
        <taxon>Pasteurellales</taxon>
        <taxon>Pasteurellaceae</taxon>
        <taxon>Aggregatibacter</taxon>
    </lineage>
</organism>
<proteinExistence type="inferred from homology"/>
<sequence>MSETILITGSSRGIGKAIALRLAQAGFDIVVHCRSRIEEAEAVAQAVRELGQNARVLQFDVSCRSEAADKLTADVEAHGAYYGVVLNAGLTRDNAFPALTDEDWDRVLRTNLDGFYNVLHPIMMPMIRRRKAGRIVCITSVSGLIGNRGQVNYSASKAGIIGAAKALAVELAKRKITVNCVAPGLIDTDILDENVPIDEILKMIPAGRMGDPEEVAHAVNFLMGEKAAYVTRQVIAVNGGLC</sequence>
<keyword id="KW-0275">Fatty acid biosynthesis</keyword>
<keyword id="KW-0276">Fatty acid metabolism</keyword>
<keyword id="KW-0444">Lipid biosynthesis</keyword>
<keyword id="KW-0443">Lipid metabolism</keyword>
<keyword id="KW-0521">NADP</keyword>
<keyword id="KW-0560">Oxidoreductase</keyword>
<evidence type="ECO:0000250" key="1"/>
<evidence type="ECO:0000305" key="2"/>
<feature type="chain" id="PRO_0000054663" description="3-oxoacyl-[acyl-carrier-protein] reductase FabG">
    <location>
        <begin position="1"/>
        <end position="242"/>
    </location>
</feature>
<feature type="active site" description="Proton acceptor" evidence="1">
    <location>
        <position position="153"/>
    </location>
</feature>
<feature type="binding site" evidence="1">
    <location>
        <begin position="9"/>
        <end position="12"/>
    </location>
    <ligand>
        <name>NADP(+)</name>
        <dbReference type="ChEBI" id="CHEBI:58349"/>
    </ligand>
</feature>
<feature type="binding site" evidence="1">
    <location>
        <position position="34"/>
    </location>
    <ligand>
        <name>NADP(+)</name>
        <dbReference type="ChEBI" id="CHEBI:58349"/>
    </ligand>
</feature>
<feature type="binding site" evidence="1">
    <location>
        <begin position="60"/>
        <end position="61"/>
    </location>
    <ligand>
        <name>NADP(+)</name>
        <dbReference type="ChEBI" id="CHEBI:58349"/>
    </ligand>
</feature>
<feature type="binding site" evidence="1">
    <location>
        <position position="87"/>
    </location>
    <ligand>
        <name>NADP(+)</name>
        <dbReference type="ChEBI" id="CHEBI:58349"/>
    </ligand>
</feature>
<feature type="binding site" evidence="1">
    <location>
        <position position="140"/>
    </location>
    <ligand>
        <name>substrate</name>
    </ligand>
</feature>
<feature type="binding site" evidence="1">
    <location>
        <begin position="153"/>
        <end position="157"/>
    </location>
    <ligand>
        <name>NADP(+)</name>
        <dbReference type="ChEBI" id="CHEBI:58349"/>
    </ligand>
</feature>
<feature type="binding site" evidence="1">
    <location>
        <position position="186"/>
    </location>
    <ligand>
        <name>NADP(+)</name>
        <dbReference type="ChEBI" id="CHEBI:58349"/>
    </ligand>
</feature>
<comment type="function">
    <text evidence="1">Catalyzes the NADPH-dependent reduction of beta-ketoacyl-ACP substrates to beta-hydroxyacyl-ACP products, the first reductive step in the elongation cycle of fatty acid biosynthesis.</text>
</comment>
<comment type="catalytic activity">
    <reaction>
        <text>a (3R)-hydroxyacyl-[ACP] + NADP(+) = a 3-oxoacyl-[ACP] + NADPH + H(+)</text>
        <dbReference type="Rhea" id="RHEA:17397"/>
        <dbReference type="Rhea" id="RHEA-COMP:9916"/>
        <dbReference type="Rhea" id="RHEA-COMP:9945"/>
        <dbReference type="ChEBI" id="CHEBI:15378"/>
        <dbReference type="ChEBI" id="CHEBI:57783"/>
        <dbReference type="ChEBI" id="CHEBI:58349"/>
        <dbReference type="ChEBI" id="CHEBI:78776"/>
        <dbReference type="ChEBI" id="CHEBI:78827"/>
        <dbReference type="EC" id="1.1.1.100"/>
    </reaction>
</comment>
<comment type="pathway">
    <text>Lipid metabolism; fatty acid biosynthesis.</text>
</comment>
<comment type="subunit">
    <text evidence="1">Homotetramer.</text>
</comment>
<comment type="similarity">
    <text evidence="2">Belongs to the short-chain dehydrogenases/reductases (SDR) family.</text>
</comment>
<gene>
    <name type="primary">fabG</name>
</gene>
<accession>P70720</accession>